<protein>
    <recommendedName>
        <fullName evidence="1">Large ribosomal subunit protein bL31</fullName>
    </recommendedName>
    <alternativeName>
        <fullName evidence="2">50S ribosomal protein L31</fullName>
    </alternativeName>
</protein>
<accession>A9BJ07</accession>
<keyword id="KW-0479">Metal-binding</keyword>
<keyword id="KW-0687">Ribonucleoprotein</keyword>
<keyword id="KW-0689">Ribosomal protein</keyword>
<keyword id="KW-0694">RNA-binding</keyword>
<keyword id="KW-0699">rRNA-binding</keyword>
<keyword id="KW-0862">Zinc</keyword>
<reference key="1">
    <citation type="submission" date="2007-11" db="EMBL/GenBank/DDBJ databases">
        <title>Complete sequence of Petroga mobilis SJ95.</title>
        <authorList>
            <consortium name="US DOE Joint Genome Institute"/>
            <person name="Copeland A."/>
            <person name="Lucas S."/>
            <person name="Lapidus A."/>
            <person name="Barry K."/>
            <person name="Glavina del Rio T."/>
            <person name="Dalin E."/>
            <person name="Tice H."/>
            <person name="Pitluck S."/>
            <person name="Meincke L."/>
            <person name="Brettin T."/>
            <person name="Bruce D."/>
            <person name="Detter J.C."/>
            <person name="Han C."/>
            <person name="Kuske C.R."/>
            <person name="Schmutz J."/>
            <person name="Larimer F."/>
            <person name="Land M."/>
            <person name="Hauser L."/>
            <person name="Kyrpides N."/>
            <person name="Mikhailova N."/>
            <person name="Noll K."/>
            <person name="Richardson P."/>
        </authorList>
    </citation>
    <scope>NUCLEOTIDE SEQUENCE [LARGE SCALE GENOMIC DNA]</scope>
    <source>
        <strain>DSM 10674 / SJ95</strain>
    </source>
</reference>
<dbReference type="EMBL" id="CP000879">
    <property type="protein sequence ID" value="ABX32495.1"/>
    <property type="molecule type" value="Genomic_DNA"/>
</dbReference>
<dbReference type="RefSeq" id="WP_012209592.1">
    <property type="nucleotide sequence ID" value="NC_010003.1"/>
</dbReference>
<dbReference type="SMR" id="A9BJ07"/>
<dbReference type="STRING" id="403833.Pmob_1806"/>
<dbReference type="KEGG" id="pmo:Pmob_1806"/>
<dbReference type="eggNOG" id="COG0254">
    <property type="taxonomic scope" value="Bacteria"/>
</dbReference>
<dbReference type="HOGENOM" id="CLU_114306_4_3_0"/>
<dbReference type="OrthoDB" id="9803251at2"/>
<dbReference type="Proteomes" id="UP000000789">
    <property type="component" value="Chromosome"/>
</dbReference>
<dbReference type="GO" id="GO:1990904">
    <property type="term" value="C:ribonucleoprotein complex"/>
    <property type="evidence" value="ECO:0007669"/>
    <property type="project" value="UniProtKB-KW"/>
</dbReference>
<dbReference type="GO" id="GO:0005840">
    <property type="term" value="C:ribosome"/>
    <property type="evidence" value="ECO:0007669"/>
    <property type="project" value="UniProtKB-KW"/>
</dbReference>
<dbReference type="GO" id="GO:0046872">
    <property type="term" value="F:metal ion binding"/>
    <property type="evidence" value="ECO:0007669"/>
    <property type="project" value="UniProtKB-KW"/>
</dbReference>
<dbReference type="GO" id="GO:0019843">
    <property type="term" value="F:rRNA binding"/>
    <property type="evidence" value="ECO:0007669"/>
    <property type="project" value="UniProtKB-KW"/>
</dbReference>
<dbReference type="GO" id="GO:0003735">
    <property type="term" value="F:structural constituent of ribosome"/>
    <property type="evidence" value="ECO:0007669"/>
    <property type="project" value="InterPro"/>
</dbReference>
<dbReference type="GO" id="GO:0006412">
    <property type="term" value="P:translation"/>
    <property type="evidence" value="ECO:0007669"/>
    <property type="project" value="UniProtKB-UniRule"/>
</dbReference>
<dbReference type="Gene3D" id="4.10.830.30">
    <property type="entry name" value="Ribosomal protein L31"/>
    <property type="match status" value="1"/>
</dbReference>
<dbReference type="HAMAP" id="MF_00501">
    <property type="entry name" value="Ribosomal_bL31_1"/>
    <property type="match status" value="1"/>
</dbReference>
<dbReference type="InterPro" id="IPR034704">
    <property type="entry name" value="Ribosomal_bL28/bL31-like_sf"/>
</dbReference>
<dbReference type="InterPro" id="IPR002150">
    <property type="entry name" value="Ribosomal_bL31"/>
</dbReference>
<dbReference type="InterPro" id="IPR027491">
    <property type="entry name" value="Ribosomal_bL31_A"/>
</dbReference>
<dbReference type="InterPro" id="IPR042105">
    <property type="entry name" value="Ribosomal_bL31_sf"/>
</dbReference>
<dbReference type="NCBIfam" id="TIGR00105">
    <property type="entry name" value="L31"/>
    <property type="match status" value="1"/>
</dbReference>
<dbReference type="NCBIfam" id="NF000612">
    <property type="entry name" value="PRK00019.1"/>
    <property type="match status" value="1"/>
</dbReference>
<dbReference type="PANTHER" id="PTHR33280">
    <property type="entry name" value="50S RIBOSOMAL PROTEIN L31, CHLOROPLASTIC"/>
    <property type="match status" value="1"/>
</dbReference>
<dbReference type="PANTHER" id="PTHR33280:SF1">
    <property type="entry name" value="LARGE RIBOSOMAL SUBUNIT PROTEIN BL31C"/>
    <property type="match status" value="1"/>
</dbReference>
<dbReference type="Pfam" id="PF01197">
    <property type="entry name" value="Ribosomal_L31"/>
    <property type="match status" value="1"/>
</dbReference>
<dbReference type="PRINTS" id="PR01249">
    <property type="entry name" value="RIBOSOMALL31"/>
</dbReference>
<dbReference type="SUPFAM" id="SSF143800">
    <property type="entry name" value="L28p-like"/>
    <property type="match status" value="1"/>
</dbReference>
<feature type="chain" id="PRO_1000126684" description="Large ribosomal subunit protein bL31">
    <location>
        <begin position="1"/>
        <end position="71"/>
    </location>
</feature>
<feature type="binding site" evidence="1">
    <location>
        <position position="16"/>
    </location>
    <ligand>
        <name>Zn(2+)</name>
        <dbReference type="ChEBI" id="CHEBI:29105"/>
    </ligand>
</feature>
<feature type="binding site" evidence="1">
    <location>
        <position position="18"/>
    </location>
    <ligand>
        <name>Zn(2+)</name>
        <dbReference type="ChEBI" id="CHEBI:29105"/>
    </ligand>
</feature>
<feature type="binding site" evidence="1">
    <location>
        <position position="36"/>
    </location>
    <ligand>
        <name>Zn(2+)</name>
        <dbReference type="ChEBI" id="CHEBI:29105"/>
    </ligand>
</feature>
<feature type="binding site" evidence="1">
    <location>
        <position position="39"/>
    </location>
    <ligand>
        <name>Zn(2+)</name>
        <dbReference type="ChEBI" id="CHEBI:29105"/>
    </ligand>
</feature>
<organism>
    <name type="scientific">Petrotoga mobilis (strain DSM 10674 / SJ95)</name>
    <dbReference type="NCBI Taxonomy" id="403833"/>
    <lineage>
        <taxon>Bacteria</taxon>
        <taxon>Thermotogati</taxon>
        <taxon>Thermotogota</taxon>
        <taxon>Thermotogae</taxon>
        <taxon>Petrotogales</taxon>
        <taxon>Petrotogaceae</taxon>
        <taxon>Petrotoga</taxon>
    </lineage>
</organism>
<evidence type="ECO:0000255" key="1">
    <source>
        <dbReference type="HAMAP-Rule" id="MF_00501"/>
    </source>
</evidence>
<evidence type="ECO:0000305" key="2"/>
<comment type="function">
    <text evidence="1">Binds the 23S rRNA.</text>
</comment>
<comment type="cofactor">
    <cofactor evidence="1">
        <name>Zn(2+)</name>
        <dbReference type="ChEBI" id="CHEBI:29105"/>
    </cofactor>
    <text evidence="1">Binds 1 zinc ion per subunit.</text>
</comment>
<comment type="subunit">
    <text evidence="1">Part of the 50S ribosomal subunit.</text>
</comment>
<comment type="similarity">
    <text evidence="1">Belongs to the bacterial ribosomal protein bL31 family. Type A subfamily.</text>
</comment>
<gene>
    <name evidence="1" type="primary">rpmE</name>
    <name type="ordered locus">Pmob_1806</name>
</gene>
<name>RL31_PETMO</name>
<proteinExistence type="inferred from homology"/>
<sequence>MKQGIHPEMKLITVKCACGAEHTMYSTVDNFRLDVCSECHPFYRGELGSQILDTEGRVQKFKNKYKDFLEN</sequence>